<name>DCE1_MOUSE</name>
<reference key="1">
    <citation type="journal article" date="1990" name="Eur. J. Neurosci.">
        <title>Molecular identification of the 62 kd form of glutamic acid decarboxylase from the mouse.</title>
        <authorList>
            <person name="Katarova Z."/>
            <person name="Szabo G."/>
            <person name="Mugnaini E."/>
            <person name="Greenspan R."/>
        </authorList>
    </citation>
    <scope>NUCLEOTIDE SEQUENCE [MRNA]</scope>
    <source>
        <tissue>Brain</tissue>
    </source>
</reference>
<reference key="2">
    <citation type="submission" date="1997-04" db="EMBL/GenBank/DDBJ databases">
        <authorList>
            <person name="Aust G."/>
            <person name="Steinbrenner H."/>
            <person name="Thamm B."/>
            <person name="Rost A.K."/>
            <person name="Seissler J."/>
        </authorList>
    </citation>
    <scope>NUCLEOTIDE SEQUENCE [MRNA]</scope>
    <source>
        <strain>BALB/cJ</strain>
    </source>
</reference>
<reference key="3">
    <citation type="journal article" date="2001" name="Mamm. Genome">
        <title>High-throughput sequence identification of gene coding variants within alcohol-related QTLs.</title>
        <authorList>
            <person name="Ehringer M.A."/>
            <person name="Thompson J."/>
            <person name="Conroy O."/>
            <person name="Xu Y."/>
            <person name="Yang F."/>
            <person name="Canniff J."/>
            <person name="Beeson M."/>
            <person name="Gordon L."/>
            <person name="Bennett B."/>
            <person name="Johnson T.E."/>
            <person name="Sikela J.M."/>
        </authorList>
    </citation>
    <scope>NUCLEOTIDE SEQUENCE [MRNA]</scope>
    <source>
        <strain>ILS</strain>
        <strain>ISS</strain>
    </source>
</reference>
<reference key="4">
    <citation type="journal article" date="2004" name="Genome Res.">
        <title>The status, quality, and expansion of the NIH full-length cDNA project: the Mammalian Gene Collection (MGC).</title>
        <authorList>
            <consortium name="The MGC Project Team"/>
        </authorList>
    </citation>
    <scope>NUCLEOTIDE SEQUENCE [LARGE SCALE MRNA]</scope>
    <source>
        <strain>C57BL/6J</strain>
        <tissue>Retina</tissue>
    </source>
</reference>
<reference key="5">
    <citation type="journal article" date="1993" name="Endocrinology">
        <title>Localization and quantitation of expression of two glutamate decarboxylase genes in pancreatic beta-cells and other peripheral tissues of mouse and rat.</title>
        <authorList>
            <person name="Faulkner-Jones B.E."/>
            <person name="Cram D.S."/>
            <person name="Kun J."/>
            <person name="Harrison L.C."/>
        </authorList>
    </citation>
    <scope>NUCLEOTIDE SEQUENCE [MRNA] OF 198-403</scope>
    <source>
        <tissue>Brain</tissue>
    </source>
</reference>
<reference key="6">
    <citation type="journal article" date="1997" name="Proc. Natl. Acad. Sci. U.S.A.">
        <title>Cleft palate and decreased brain gamma-aminobutyric acid in mice lacking the 67-kDa isoform of glutamic acid decarboxylase.</title>
        <authorList>
            <person name="Asada H."/>
            <person name="Kawamura Y."/>
            <person name="Maruyama K."/>
            <person name="Kume H."/>
            <person name="Ding R.G."/>
            <person name="Kanbara N."/>
            <person name="Kuzume H."/>
            <person name="Sanbo M."/>
            <person name="Yagi T."/>
            <person name="Obata K."/>
        </authorList>
    </citation>
    <scope>DISRUPTION PHENOTYPE</scope>
    <scope>FUNCTION</scope>
    <scope>CATALYTIC ACTIVITY</scope>
</reference>
<reference key="7">
    <citation type="journal article" date="2010" name="Cell">
        <title>A tissue-specific atlas of mouse protein phosphorylation and expression.</title>
        <authorList>
            <person name="Huttlin E.L."/>
            <person name="Jedrychowski M.P."/>
            <person name="Elias J.E."/>
            <person name="Goswami T."/>
            <person name="Rad R."/>
            <person name="Beausoleil S.A."/>
            <person name="Villen J."/>
            <person name="Haas W."/>
            <person name="Sowa M.E."/>
            <person name="Gygi S.P."/>
        </authorList>
    </citation>
    <scope>PHOSPHORYLATION [LARGE SCALE ANALYSIS] AT SER-77</scope>
    <scope>IDENTIFICATION BY MASS SPECTROMETRY [LARGE SCALE ANALYSIS]</scope>
    <source>
        <tissue>Brain</tissue>
        <tissue>Liver</tissue>
    </source>
</reference>
<organism>
    <name type="scientific">Mus musculus</name>
    <name type="common">Mouse</name>
    <dbReference type="NCBI Taxonomy" id="10090"/>
    <lineage>
        <taxon>Eukaryota</taxon>
        <taxon>Metazoa</taxon>
        <taxon>Chordata</taxon>
        <taxon>Craniata</taxon>
        <taxon>Vertebrata</taxon>
        <taxon>Euteleostomi</taxon>
        <taxon>Mammalia</taxon>
        <taxon>Eutheria</taxon>
        <taxon>Euarchontoglires</taxon>
        <taxon>Glires</taxon>
        <taxon>Rodentia</taxon>
        <taxon>Myomorpha</taxon>
        <taxon>Muroidea</taxon>
        <taxon>Muridae</taxon>
        <taxon>Murinae</taxon>
        <taxon>Mus</taxon>
        <taxon>Mus</taxon>
    </lineage>
</organism>
<dbReference type="EC" id="4.1.1.15" evidence="3"/>
<dbReference type="EMBL" id="Z49976">
    <property type="protein sequence ID" value="CAA90277.1"/>
    <property type="molecule type" value="mRNA"/>
</dbReference>
<dbReference type="EMBL" id="Y12257">
    <property type="protein sequence ID" value="CAA72934.1"/>
    <property type="molecule type" value="mRNA"/>
</dbReference>
<dbReference type="EMBL" id="AF483492">
    <property type="protein sequence ID" value="AAL90766.1"/>
    <property type="molecule type" value="mRNA"/>
</dbReference>
<dbReference type="EMBL" id="AF483493">
    <property type="protein sequence ID" value="AAL90767.1"/>
    <property type="molecule type" value="mRNA"/>
</dbReference>
<dbReference type="EMBL" id="BC027059">
    <property type="protein sequence ID" value="AAH27059.1"/>
    <property type="molecule type" value="mRNA"/>
</dbReference>
<dbReference type="EMBL" id="S67453">
    <property type="status" value="NOT_ANNOTATED_CDS"/>
    <property type="molecule type" value="mRNA"/>
</dbReference>
<dbReference type="CCDS" id="CCDS16108.1"/>
<dbReference type="PIR" id="S61534">
    <property type="entry name" value="S61534"/>
</dbReference>
<dbReference type="RefSeq" id="NP_001407028.1">
    <property type="nucleotide sequence ID" value="NM_001420099.1"/>
</dbReference>
<dbReference type="RefSeq" id="NP_001407029.1">
    <property type="nucleotide sequence ID" value="NM_001420100.1"/>
</dbReference>
<dbReference type="RefSeq" id="NP_001407030.1">
    <property type="nucleotide sequence ID" value="NM_001420101.1"/>
</dbReference>
<dbReference type="RefSeq" id="NP_032103.2">
    <property type="nucleotide sequence ID" value="NM_008077.5"/>
</dbReference>
<dbReference type="RefSeq" id="XP_006498828.1">
    <property type="nucleotide sequence ID" value="XM_006498765.3"/>
</dbReference>
<dbReference type="RefSeq" id="XP_006498829.1">
    <property type="nucleotide sequence ID" value="XM_006498766.3"/>
</dbReference>
<dbReference type="SMR" id="P48318"/>
<dbReference type="BioGRID" id="199814">
    <property type="interactions" value="13"/>
</dbReference>
<dbReference type="ComplexPortal" id="CPX-3061">
    <property type="entry name" value="Glutamate decarboxylase 1 complex"/>
</dbReference>
<dbReference type="ComplexPortal" id="CPX-3064">
    <property type="entry name" value="Glutamate decarboxylase 1/2 complex"/>
</dbReference>
<dbReference type="FunCoup" id="P48318">
    <property type="interactions" value="804"/>
</dbReference>
<dbReference type="IntAct" id="P48318">
    <property type="interactions" value="1"/>
</dbReference>
<dbReference type="STRING" id="10090.ENSMUSP00000092539"/>
<dbReference type="GlyGen" id="P48318">
    <property type="glycosylation" value="2 sites, 1 N-linked glycan (1 site), 1 O-linked glycan (1 site)"/>
</dbReference>
<dbReference type="iPTMnet" id="P48318"/>
<dbReference type="PhosphoSitePlus" id="P48318"/>
<dbReference type="SwissPalm" id="P48318"/>
<dbReference type="PaxDb" id="10090-ENSMUSP00000092539"/>
<dbReference type="PeptideAtlas" id="P48318"/>
<dbReference type="ProteomicsDB" id="279836"/>
<dbReference type="ABCD" id="P48318">
    <property type="antibodies" value="2 sequenced antibodies"/>
</dbReference>
<dbReference type="Antibodypedia" id="3831">
    <property type="antibodies" value="756 antibodies from 46 providers"/>
</dbReference>
<dbReference type="DNASU" id="14415"/>
<dbReference type="Ensembl" id="ENSMUST00000094934.11">
    <property type="protein sequence ID" value="ENSMUSP00000092539.5"/>
    <property type="gene ID" value="ENSMUSG00000070880.11"/>
</dbReference>
<dbReference type="GeneID" id="14415"/>
<dbReference type="KEGG" id="mmu:14415"/>
<dbReference type="UCSC" id="uc008jzk.1">
    <property type="organism name" value="mouse"/>
</dbReference>
<dbReference type="AGR" id="MGI:95632"/>
<dbReference type="CTD" id="2571"/>
<dbReference type="MGI" id="MGI:95632">
    <property type="gene designation" value="Gad1"/>
</dbReference>
<dbReference type="VEuPathDB" id="HostDB:ENSMUSG00000070880"/>
<dbReference type="eggNOG" id="KOG0629">
    <property type="taxonomic scope" value="Eukaryota"/>
</dbReference>
<dbReference type="GeneTree" id="ENSGT00940000155526"/>
<dbReference type="HOGENOM" id="CLU_011856_0_0_1"/>
<dbReference type="InParanoid" id="P48318"/>
<dbReference type="OMA" id="RHATYHA"/>
<dbReference type="OrthoDB" id="392571at2759"/>
<dbReference type="PhylomeDB" id="P48318"/>
<dbReference type="TreeFam" id="TF314688"/>
<dbReference type="BRENDA" id="4.1.1.15">
    <property type="organism ID" value="3474"/>
</dbReference>
<dbReference type="Reactome" id="R-MMU-888568">
    <property type="pathway name" value="GABA synthesis"/>
</dbReference>
<dbReference type="Reactome" id="R-MMU-888590">
    <property type="pathway name" value="GABA synthesis, release, reuptake and degradation"/>
</dbReference>
<dbReference type="BioGRID-ORCS" id="14415">
    <property type="hits" value="2 hits in 80 CRISPR screens"/>
</dbReference>
<dbReference type="CD-CODE" id="CE726F99">
    <property type="entry name" value="Postsynaptic density"/>
</dbReference>
<dbReference type="PRO" id="PR:P48318"/>
<dbReference type="Proteomes" id="UP000000589">
    <property type="component" value="Chromosome 2"/>
</dbReference>
<dbReference type="RNAct" id="P48318">
    <property type="molecule type" value="protein"/>
</dbReference>
<dbReference type="Bgee" id="ENSMUSG00000070880">
    <property type="expression patterns" value="Expressed in lateral septal nucleus and 194 other cell types or tissues"/>
</dbReference>
<dbReference type="ExpressionAtlas" id="P48318">
    <property type="expression patterns" value="baseline and differential"/>
</dbReference>
<dbReference type="GO" id="GO:0030424">
    <property type="term" value="C:axon"/>
    <property type="evidence" value="ECO:0000314"/>
    <property type="project" value="MGI"/>
</dbReference>
<dbReference type="GO" id="GO:0043679">
    <property type="term" value="C:axon terminus"/>
    <property type="evidence" value="ECO:0000314"/>
    <property type="project" value="MGI"/>
</dbReference>
<dbReference type="GO" id="GO:0005938">
    <property type="term" value="C:cell cortex"/>
    <property type="evidence" value="ECO:0000314"/>
    <property type="project" value="MGI"/>
</dbReference>
<dbReference type="GO" id="GO:0061202">
    <property type="term" value="C:clathrin-sculpted gamma-aminobutyric acid transport vesicle membrane"/>
    <property type="evidence" value="ECO:0000304"/>
    <property type="project" value="Reactome"/>
</dbReference>
<dbReference type="GO" id="GO:0005737">
    <property type="term" value="C:cytoplasm"/>
    <property type="evidence" value="ECO:0000314"/>
    <property type="project" value="MGI"/>
</dbReference>
<dbReference type="GO" id="GO:0098982">
    <property type="term" value="C:GABA-ergic synapse"/>
    <property type="evidence" value="ECO:0000314"/>
    <property type="project" value="SynGO"/>
</dbReference>
<dbReference type="GO" id="GO:0060077">
    <property type="term" value="C:inhibitory synapse"/>
    <property type="evidence" value="ECO:0000314"/>
    <property type="project" value="MGI"/>
</dbReference>
<dbReference type="GO" id="GO:0005739">
    <property type="term" value="C:mitochondrion"/>
    <property type="evidence" value="ECO:0007005"/>
    <property type="project" value="MGI"/>
</dbReference>
<dbReference type="GO" id="GO:0044306">
    <property type="term" value="C:neuron projection terminus"/>
    <property type="evidence" value="ECO:0000314"/>
    <property type="project" value="MGI"/>
</dbReference>
<dbReference type="GO" id="GO:0048471">
    <property type="term" value="C:perinuclear region of cytoplasm"/>
    <property type="evidence" value="ECO:0000314"/>
    <property type="project" value="MGI"/>
</dbReference>
<dbReference type="GO" id="GO:0098793">
    <property type="term" value="C:presynapse"/>
    <property type="evidence" value="ECO:0000314"/>
    <property type="project" value="SynGO"/>
</dbReference>
<dbReference type="GO" id="GO:0048786">
    <property type="term" value="C:presynaptic active zone"/>
    <property type="evidence" value="ECO:0000314"/>
    <property type="project" value="MGI"/>
</dbReference>
<dbReference type="GO" id="GO:0045202">
    <property type="term" value="C:synapse"/>
    <property type="evidence" value="ECO:0000314"/>
    <property type="project" value="MGI"/>
</dbReference>
<dbReference type="GO" id="GO:0004351">
    <property type="term" value="F:glutamate decarboxylase activity"/>
    <property type="evidence" value="ECO:0000315"/>
    <property type="project" value="UniProtKB"/>
</dbReference>
<dbReference type="GO" id="GO:0042802">
    <property type="term" value="F:identical protein binding"/>
    <property type="evidence" value="ECO:0000250"/>
    <property type="project" value="UniProtKB"/>
</dbReference>
<dbReference type="GO" id="GO:0030170">
    <property type="term" value="F:pyridoxal phosphate binding"/>
    <property type="evidence" value="ECO:0007669"/>
    <property type="project" value="InterPro"/>
</dbReference>
<dbReference type="GO" id="GO:0009449">
    <property type="term" value="P:gamma-aminobutyric acid biosynthetic process"/>
    <property type="evidence" value="ECO:0000315"/>
    <property type="project" value="UniProtKB"/>
</dbReference>
<dbReference type="GO" id="GO:0006538">
    <property type="term" value="P:glutamate catabolic process"/>
    <property type="evidence" value="ECO:0007669"/>
    <property type="project" value="Ensembl"/>
</dbReference>
<dbReference type="GO" id="GO:0035641">
    <property type="term" value="P:locomotory exploration behavior"/>
    <property type="evidence" value="ECO:0000315"/>
    <property type="project" value="MGI"/>
</dbReference>
<dbReference type="GO" id="GO:0035176">
    <property type="term" value="P:social behavior"/>
    <property type="evidence" value="ECO:0000315"/>
    <property type="project" value="MGI"/>
</dbReference>
<dbReference type="CDD" id="cd06450">
    <property type="entry name" value="DOPA_deC_like"/>
    <property type="match status" value="1"/>
</dbReference>
<dbReference type="FunFam" id="3.90.1150.170:FF:000003">
    <property type="entry name" value="Glutamate decarboxylase 1"/>
    <property type="match status" value="1"/>
</dbReference>
<dbReference type="FunFam" id="3.40.640.10:FF:000016">
    <property type="entry name" value="Glutamate decarboxylase like 1"/>
    <property type="match status" value="1"/>
</dbReference>
<dbReference type="Gene3D" id="3.90.1150.170">
    <property type="match status" value="1"/>
</dbReference>
<dbReference type="Gene3D" id="3.40.640.10">
    <property type="entry name" value="Type I PLP-dependent aspartate aminotransferase-like (Major domain)"/>
    <property type="match status" value="1"/>
</dbReference>
<dbReference type="InterPro" id="IPR002129">
    <property type="entry name" value="PyrdxlP-dep_de-COase"/>
</dbReference>
<dbReference type="InterPro" id="IPR015424">
    <property type="entry name" value="PyrdxlP-dep_Trfase"/>
</dbReference>
<dbReference type="InterPro" id="IPR015421">
    <property type="entry name" value="PyrdxlP-dep_Trfase_major"/>
</dbReference>
<dbReference type="InterPro" id="IPR021115">
    <property type="entry name" value="Pyridoxal-P_BS"/>
</dbReference>
<dbReference type="PANTHER" id="PTHR45677:SF5">
    <property type="entry name" value="GLUTAMATE DECARBOXYLASE 1"/>
    <property type="match status" value="1"/>
</dbReference>
<dbReference type="PANTHER" id="PTHR45677">
    <property type="entry name" value="GLUTAMATE DECARBOXYLASE-RELATED"/>
    <property type="match status" value="1"/>
</dbReference>
<dbReference type="Pfam" id="PF00282">
    <property type="entry name" value="Pyridoxal_deC"/>
    <property type="match status" value="1"/>
</dbReference>
<dbReference type="SUPFAM" id="SSF53383">
    <property type="entry name" value="PLP-dependent transferases"/>
    <property type="match status" value="1"/>
</dbReference>
<dbReference type="PROSITE" id="PS00392">
    <property type="entry name" value="DDC_GAD_HDC_YDC"/>
    <property type="match status" value="1"/>
</dbReference>
<evidence type="ECO:0000250" key="1">
    <source>
        <dbReference type="UniProtKB" id="Q99259"/>
    </source>
</evidence>
<evidence type="ECO:0000256" key="2">
    <source>
        <dbReference type="SAM" id="MobiDB-lite"/>
    </source>
</evidence>
<evidence type="ECO:0000269" key="3">
    <source>
    </source>
</evidence>
<evidence type="ECO:0000305" key="4"/>
<evidence type="ECO:0000305" key="5">
    <source>
    </source>
</evidence>
<evidence type="ECO:0007744" key="6">
    <source>
    </source>
</evidence>
<keyword id="KW-0210">Decarboxylase</keyword>
<keyword id="KW-0456">Lyase</keyword>
<keyword id="KW-0530">Neurotransmitter biosynthesis</keyword>
<keyword id="KW-0597">Phosphoprotein</keyword>
<keyword id="KW-0663">Pyridoxal phosphate</keyword>
<keyword id="KW-1185">Reference proteome</keyword>
<proteinExistence type="evidence at protein level"/>
<sequence length="593" mass="66648">MASSTPSPATSSNAGADPNTTNLRPTTYDTWCGVAHGCTRKLGLKICGFLQRTNSLEEKSRLVSAFRERQSSKNLLSCENSDQGARFRRTETDFSNLFAQDLLPAKNGEEQTAQFLLEVVDILLNYVRKTFDRSTKVLDFHHPHQLLEGMEGFNLELSDHPESLEQILVDCRDTLKYGVRTGHPRFFNQLSTGLDIIGLAGEWLTSTANTNMFTYEIAPVFVLMEQITLKKMREIVGWSNKDGDGIFSPGGAISNMYSIMAARYKYFPEVKTKGMAAVPKLVLFTSEHSHYSIKKAGAALGFGTDNVILIKCNERGKIIPADLEAKILDAKQKGYVPLYVNATAGTTVYGAFDPIQEIADICEKYNLWLHVDAAWGGGLLMSRKHRHKLSGIERANSVTWNPHKMMGVLLQCSAILVKEKGILQGCNQMCAGYLFQPDKQYDVSYDTGDKAIQCGRHVDIFKFWLMWKAKGTVGFENQINKCLELADYLYAKIKNREEFEMVFDGEPEHTNVCFWYIPQSLRGVPDSPERREKLHRVAPKIKALMMESGTTMVGYQPQGDKANFFRMVISNPAATQSDIDFLIEEIERLGQDL</sequence>
<protein>
    <recommendedName>
        <fullName>Glutamate decarboxylase 1</fullName>
        <ecNumber evidence="3">4.1.1.15</ecNumber>
    </recommendedName>
    <alternativeName>
        <fullName>67 kDa glutamic acid decarboxylase</fullName>
        <shortName>GAD-67</shortName>
    </alternativeName>
    <alternativeName>
        <fullName>Glutamate decarboxylase 67 kDa isoform</fullName>
    </alternativeName>
</protein>
<comment type="function">
    <text evidence="3">Catalyzes the synthesis of the inhibitory neurotransmitter gamma-aminobutyric acid (GABA) with pyridoxal 5'-phosphate as cofactor.</text>
</comment>
<comment type="catalytic activity">
    <reaction evidence="3">
        <text>L-glutamate + H(+) = 4-aminobutanoate + CO2</text>
        <dbReference type="Rhea" id="RHEA:17785"/>
        <dbReference type="ChEBI" id="CHEBI:15378"/>
        <dbReference type="ChEBI" id="CHEBI:16526"/>
        <dbReference type="ChEBI" id="CHEBI:29985"/>
        <dbReference type="ChEBI" id="CHEBI:59888"/>
        <dbReference type="EC" id="4.1.1.15"/>
    </reaction>
    <physiologicalReaction direction="left-to-right" evidence="5">
        <dbReference type="Rhea" id="RHEA:17786"/>
    </physiologicalReaction>
</comment>
<comment type="cofactor">
    <cofactor evidence="3">
        <name>pyridoxal 5'-phosphate</name>
        <dbReference type="ChEBI" id="CHEBI:597326"/>
    </cofactor>
</comment>
<comment type="subunit">
    <text evidence="1">Homodimer.</text>
</comment>
<comment type="disruption phenotype">
    <text evidence="3">Deficient mice die at birth with cleft palate and apnea and exhibit reduced levels of glutamic acid decarboxylase and gamma-aminobutyric acid in the cerebral cortex.</text>
</comment>
<comment type="similarity">
    <text evidence="4">Belongs to the group II decarboxylase family.</text>
</comment>
<gene>
    <name type="primary">Gad1</name>
    <name type="synonym">Gad67</name>
</gene>
<accession>P48318</accession>
<accession>O08685</accession>
<feature type="chain" id="PRO_0000146964" description="Glutamate decarboxylase 1">
    <location>
        <begin position="1"/>
        <end position="593"/>
    </location>
</feature>
<feature type="region of interest" description="Disordered" evidence="2">
    <location>
        <begin position="1"/>
        <end position="22"/>
    </location>
</feature>
<feature type="compositionally biased region" description="Low complexity" evidence="2">
    <location>
        <begin position="1"/>
        <end position="12"/>
    </location>
</feature>
<feature type="binding site" evidence="1">
    <location>
        <begin position="189"/>
        <end position="191"/>
    </location>
    <ligand>
        <name>4-aminobutanoate</name>
        <dbReference type="ChEBI" id="CHEBI:59888"/>
    </ligand>
</feature>
<feature type="binding site" evidence="1">
    <location>
        <position position="566"/>
    </location>
    <ligand>
        <name>4-aminobutanoate</name>
        <dbReference type="ChEBI" id="CHEBI:59888"/>
    </ligand>
</feature>
<feature type="modified residue" description="Phosphoserine" evidence="6">
    <location>
        <position position="77"/>
    </location>
</feature>
<feature type="modified residue" description="N6-(pyridoxal phosphate)lysine" evidence="1">
    <location>
        <position position="404"/>
    </location>
</feature>
<feature type="sequence conflict" description="In Ref. 1; CAA90277." evidence="4" ref="1">
    <original>R</original>
    <variation>H</variation>
    <location>
        <position position="133"/>
    </location>
</feature>
<feature type="sequence conflict" description="In Ref. 5; S67453." evidence="4" ref="5">
    <original>E</original>
    <variation>K</variation>
    <location>
        <position position="234"/>
    </location>
</feature>
<feature type="sequence conflict" description="In Ref. 1; CAA90277." evidence="4" ref="1">
    <original>S</original>
    <variation>T</variation>
    <location>
        <position position="258"/>
    </location>
</feature>
<feature type="sequence conflict" description="In Ref. 1; CAA90277." evidence="4" ref="1">
    <original>D</original>
    <variation>S</variation>
    <location>
        <position position="360"/>
    </location>
</feature>
<feature type="sequence conflict" description="In Ref. 1; CAA90277." evidence="4" ref="1">
    <original>F</original>
    <variation>N</variation>
    <location>
        <position position="461"/>
    </location>
</feature>
<feature type="sequence conflict" description="In Ref. 1; CAA90277." evidence="4" ref="1">
    <original>G</original>
    <variation>A</variation>
    <location>
        <position position="554"/>
    </location>
</feature>
<feature type="sequence conflict" description="In Ref. 1; CAA90277." evidence="4" ref="1">
    <original>T</original>
    <variation>S</variation>
    <location>
        <position position="575"/>
    </location>
</feature>
<feature type="sequence conflict" description="In Ref. 1; CAA90277." evidence="4" ref="1">
    <original>I</original>
    <variation>T</variation>
    <location>
        <position position="583"/>
    </location>
</feature>